<feature type="chain" id="PRO_0000193792" description="AP-2 complex subunit mu">
    <location>
        <begin position="1"/>
        <end position="439"/>
    </location>
</feature>
<feature type="domain" description="MHD" evidence="2">
    <location>
        <begin position="172"/>
        <end position="438"/>
    </location>
</feature>
<feature type="sequence conflict" description="In Ref. 1; AAB41282." evidence="3" ref="1">
    <original>A</original>
    <variation>G</variation>
    <location>
        <position position="29"/>
    </location>
</feature>
<feature type="sequence conflict" description="In Ref. 1; AAB41282." evidence="3" ref="1">
    <original>S</original>
    <variation>V</variation>
    <location>
        <position position="39"/>
    </location>
</feature>
<feature type="sequence conflict" description="In Ref. 1; AAB41282." evidence="3" ref="1">
    <original>Q</original>
    <variation>H</variation>
    <location>
        <position position="156"/>
    </location>
</feature>
<feature type="sequence conflict" description="In Ref. 1; AAB41282." evidence="3" ref="1">
    <original>A</original>
    <variation>R</variation>
    <location>
        <position position="240"/>
    </location>
</feature>
<reference key="1">
    <citation type="journal article" date="1996" name="Gene">
        <title>Cloning and characterization of a Dictyostelium discoideum cDNA encoding a protein related to the medium chain subunit of clathrin-associated adaptor complexes.</title>
        <authorList>
            <person name="Temesvari L.A."/>
            <person name="Seastone D.J."/>
            <person name="Cardelli J.A."/>
        </authorList>
    </citation>
    <scope>NUCLEOTIDE SEQUENCE [MRNA]</scope>
</reference>
<reference key="2">
    <citation type="journal article" date="2002" name="Nature">
        <title>Sequence and analysis of chromosome 2 of Dictyostelium discoideum.</title>
        <authorList>
            <person name="Gloeckner G."/>
            <person name="Eichinger L."/>
            <person name="Szafranski K."/>
            <person name="Pachebat J.A."/>
            <person name="Bankier A.T."/>
            <person name="Dear P.H."/>
            <person name="Lehmann R."/>
            <person name="Baumgart C."/>
            <person name="Parra G."/>
            <person name="Abril J.F."/>
            <person name="Guigo R."/>
            <person name="Kumpf K."/>
            <person name="Tunggal B."/>
            <person name="Cox E.C."/>
            <person name="Quail M.A."/>
            <person name="Platzer M."/>
            <person name="Rosenthal A."/>
            <person name="Noegel A.A."/>
        </authorList>
    </citation>
    <scope>NUCLEOTIDE SEQUENCE [LARGE SCALE GENOMIC DNA]</scope>
    <source>
        <strain>AX4</strain>
    </source>
</reference>
<reference key="3">
    <citation type="journal article" date="2005" name="Nature">
        <title>The genome of the social amoeba Dictyostelium discoideum.</title>
        <authorList>
            <person name="Eichinger L."/>
            <person name="Pachebat J.A."/>
            <person name="Gloeckner G."/>
            <person name="Rajandream M.A."/>
            <person name="Sucgang R."/>
            <person name="Berriman M."/>
            <person name="Song J."/>
            <person name="Olsen R."/>
            <person name="Szafranski K."/>
            <person name="Xu Q."/>
            <person name="Tunggal B."/>
            <person name="Kummerfeld S."/>
            <person name="Madera M."/>
            <person name="Konfortov B.A."/>
            <person name="Rivero F."/>
            <person name="Bankier A.T."/>
            <person name="Lehmann R."/>
            <person name="Hamlin N."/>
            <person name="Davies R."/>
            <person name="Gaudet P."/>
            <person name="Fey P."/>
            <person name="Pilcher K."/>
            <person name="Chen G."/>
            <person name="Saunders D."/>
            <person name="Sodergren E.J."/>
            <person name="Davis P."/>
            <person name="Kerhornou A."/>
            <person name="Nie X."/>
            <person name="Hall N."/>
            <person name="Anjard C."/>
            <person name="Hemphill L."/>
            <person name="Bason N."/>
            <person name="Farbrother P."/>
            <person name="Desany B."/>
            <person name="Just E."/>
            <person name="Morio T."/>
            <person name="Rost R."/>
            <person name="Churcher C.M."/>
            <person name="Cooper J."/>
            <person name="Haydock S."/>
            <person name="van Driessche N."/>
            <person name="Cronin A."/>
            <person name="Goodhead I."/>
            <person name="Muzny D.M."/>
            <person name="Mourier T."/>
            <person name="Pain A."/>
            <person name="Lu M."/>
            <person name="Harper D."/>
            <person name="Lindsay R."/>
            <person name="Hauser H."/>
            <person name="James K.D."/>
            <person name="Quiles M."/>
            <person name="Madan Babu M."/>
            <person name="Saito T."/>
            <person name="Buchrieser C."/>
            <person name="Wardroper A."/>
            <person name="Felder M."/>
            <person name="Thangavelu M."/>
            <person name="Johnson D."/>
            <person name="Knights A."/>
            <person name="Loulseged H."/>
            <person name="Mungall K.L."/>
            <person name="Oliver K."/>
            <person name="Price C."/>
            <person name="Quail M.A."/>
            <person name="Urushihara H."/>
            <person name="Hernandez J."/>
            <person name="Rabbinowitsch E."/>
            <person name="Steffen D."/>
            <person name="Sanders M."/>
            <person name="Ma J."/>
            <person name="Kohara Y."/>
            <person name="Sharp S."/>
            <person name="Simmonds M.N."/>
            <person name="Spiegler S."/>
            <person name="Tivey A."/>
            <person name="Sugano S."/>
            <person name="White B."/>
            <person name="Walker D."/>
            <person name="Woodward J.R."/>
            <person name="Winckler T."/>
            <person name="Tanaka Y."/>
            <person name="Shaulsky G."/>
            <person name="Schleicher M."/>
            <person name="Weinstock G.M."/>
            <person name="Rosenthal A."/>
            <person name="Cox E.C."/>
            <person name="Chisholm R.L."/>
            <person name="Gibbs R.A."/>
            <person name="Loomis W.F."/>
            <person name="Platzer M."/>
            <person name="Kay R.R."/>
            <person name="Williams J.G."/>
            <person name="Dear P.H."/>
            <person name="Noegel A.A."/>
            <person name="Barrell B.G."/>
            <person name="Kuspa A."/>
        </authorList>
    </citation>
    <scope>NUCLEOTIDE SEQUENCE [LARGE SCALE GENOMIC DNA]</scope>
    <source>
        <strain>AX4</strain>
    </source>
</reference>
<organism>
    <name type="scientific">Dictyostelium discoideum</name>
    <name type="common">Social amoeba</name>
    <dbReference type="NCBI Taxonomy" id="44689"/>
    <lineage>
        <taxon>Eukaryota</taxon>
        <taxon>Amoebozoa</taxon>
        <taxon>Evosea</taxon>
        <taxon>Eumycetozoa</taxon>
        <taxon>Dictyostelia</taxon>
        <taxon>Dictyosteliales</taxon>
        <taxon>Dictyosteliaceae</taxon>
        <taxon>Dictyostelium</taxon>
    </lineage>
</organism>
<protein>
    <recommendedName>
        <fullName>AP-2 complex subunit mu</fullName>
    </recommendedName>
    <alternativeName>
        <fullName>Clathrin assembly protein complex 2 mu medium chain</fullName>
    </alternativeName>
    <alternativeName>
        <fullName>Clathrin coat assembly protein AP50</fullName>
    </alternativeName>
    <alternativeName>
        <fullName>Clathrin coat-associated protein AP50</fullName>
    </alternativeName>
    <alternativeName>
        <fullName>Clathrin-adaptor medium chain Apm2</fullName>
    </alternativeName>
    <alternativeName>
        <fullName>Mu2-adaptin</fullName>
    </alternativeName>
    <alternativeName>
        <fullName>Plasma membrane adaptor AP-2 50 kDa protein</fullName>
    </alternativeName>
</protein>
<accession>P54672</accession>
<accession>Q54ZW7</accession>
<accession>Q86AQ0</accession>
<dbReference type="EMBL" id="U44890">
    <property type="protein sequence ID" value="AAB41282.1"/>
    <property type="molecule type" value="mRNA"/>
</dbReference>
<dbReference type="EMBL" id="AAFI02000019">
    <property type="protein sequence ID" value="EAL68755.1"/>
    <property type="molecule type" value="Genomic_DNA"/>
</dbReference>
<dbReference type="PIR" id="JC5719">
    <property type="entry name" value="JC5719"/>
</dbReference>
<dbReference type="RefSeq" id="XP_642749.1">
    <property type="nucleotide sequence ID" value="XM_637657.1"/>
</dbReference>
<dbReference type="SMR" id="P54672"/>
<dbReference type="FunCoup" id="P54672">
    <property type="interactions" value="904"/>
</dbReference>
<dbReference type="STRING" id="44689.P54672"/>
<dbReference type="PaxDb" id="44689-DDB0191267"/>
<dbReference type="EnsemblProtists" id="EAL68755">
    <property type="protein sequence ID" value="EAL68755"/>
    <property type="gene ID" value="DDB_G0277139"/>
</dbReference>
<dbReference type="GeneID" id="8620939"/>
<dbReference type="KEGG" id="ddi:DDB_G0277139"/>
<dbReference type="dictyBase" id="DDB_G0277139">
    <property type="gene designation" value="apm2"/>
</dbReference>
<dbReference type="VEuPathDB" id="AmoebaDB:DDB_G0277139"/>
<dbReference type="eggNOG" id="KOG0938">
    <property type="taxonomic scope" value="Eukaryota"/>
</dbReference>
<dbReference type="HOGENOM" id="CLU_026996_5_2_1"/>
<dbReference type="InParanoid" id="P54672"/>
<dbReference type="OMA" id="WRTPDIK"/>
<dbReference type="PhylomeDB" id="P54672"/>
<dbReference type="Reactome" id="R-DDI-437239">
    <property type="pathway name" value="Recycling pathway of L1"/>
</dbReference>
<dbReference type="Reactome" id="R-DDI-8856825">
    <property type="pathway name" value="Cargo recognition for clathrin-mediated endocytosis"/>
</dbReference>
<dbReference type="Reactome" id="R-DDI-8856828">
    <property type="pathway name" value="Clathrin-mediated endocytosis"/>
</dbReference>
<dbReference type="Reactome" id="R-DDI-8866427">
    <property type="pathway name" value="VLDLR internalisation and degradation"/>
</dbReference>
<dbReference type="Reactome" id="R-DDI-8964038">
    <property type="pathway name" value="LDL clearance"/>
</dbReference>
<dbReference type="PRO" id="PR:P54672"/>
<dbReference type="Proteomes" id="UP000002195">
    <property type="component" value="Chromosome 2"/>
</dbReference>
<dbReference type="GO" id="GO:0030122">
    <property type="term" value="C:AP-2 adaptor complex"/>
    <property type="evidence" value="ECO:0000314"/>
    <property type="project" value="dictyBase"/>
</dbReference>
<dbReference type="GO" id="GO:0030132">
    <property type="term" value="C:clathrin coat of coated pit"/>
    <property type="evidence" value="ECO:0000305"/>
    <property type="project" value="dictyBase"/>
</dbReference>
<dbReference type="GO" id="GO:0005905">
    <property type="term" value="C:clathrin-coated pit"/>
    <property type="evidence" value="ECO:0000250"/>
    <property type="project" value="dictyBase"/>
</dbReference>
<dbReference type="GO" id="GO:0031410">
    <property type="term" value="C:cytoplasmic vesicle"/>
    <property type="evidence" value="ECO:0000318"/>
    <property type="project" value="GO_Central"/>
</dbReference>
<dbReference type="GO" id="GO:0031201">
    <property type="term" value="C:SNARE complex"/>
    <property type="evidence" value="ECO:0000314"/>
    <property type="project" value="dictyBase"/>
</dbReference>
<dbReference type="GO" id="GO:0035615">
    <property type="term" value="F:clathrin adaptor activity"/>
    <property type="evidence" value="ECO:0000318"/>
    <property type="project" value="GO_Central"/>
</dbReference>
<dbReference type="GO" id="GO:0072583">
    <property type="term" value="P:clathrin-dependent endocytosis"/>
    <property type="evidence" value="ECO:0000318"/>
    <property type="project" value="GO_Central"/>
</dbReference>
<dbReference type="GO" id="GO:0006886">
    <property type="term" value="P:intracellular protein transport"/>
    <property type="evidence" value="ECO:0007669"/>
    <property type="project" value="InterPro"/>
</dbReference>
<dbReference type="CDD" id="cd09251">
    <property type="entry name" value="AP-2_Mu2_Cterm"/>
    <property type="match status" value="1"/>
</dbReference>
<dbReference type="CDD" id="cd14836">
    <property type="entry name" value="AP2_Mu_N"/>
    <property type="match status" value="1"/>
</dbReference>
<dbReference type="FunFam" id="3.30.450.60:FF:000002">
    <property type="entry name" value="AP-2 complex subunit mu, putative"/>
    <property type="match status" value="1"/>
</dbReference>
<dbReference type="Gene3D" id="3.30.450.60">
    <property type="match status" value="1"/>
</dbReference>
<dbReference type="Gene3D" id="2.60.40.1170">
    <property type="entry name" value="Mu homology domain, subdomain B"/>
    <property type="match status" value="2"/>
</dbReference>
<dbReference type="InterPro" id="IPR050431">
    <property type="entry name" value="Adaptor_comp_med_subunit"/>
</dbReference>
<dbReference type="InterPro" id="IPR036168">
    <property type="entry name" value="AP2_Mu_C_sf"/>
</dbReference>
<dbReference type="InterPro" id="IPR043532">
    <property type="entry name" value="AP2_Mu_N"/>
</dbReference>
<dbReference type="InterPro" id="IPR022775">
    <property type="entry name" value="AP_mu_sigma_su"/>
</dbReference>
<dbReference type="InterPro" id="IPR001392">
    <property type="entry name" value="Clathrin_mu"/>
</dbReference>
<dbReference type="InterPro" id="IPR018240">
    <property type="entry name" value="Clathrin_mu_CS"/>
</dbReference>
<dbReference type="InterPro" id="IPR011012">
    <property type="entry name" value="Longin-like_dom_sf"/>
</dbReference>
<dbReference type="InterPro" id="IPR028565">
    <property type="entry name" value="MHD"/>
</dbReference>
<dbReference type="InterPro" id="IPR043512">
    <property type="entry name" value="Mu2_C"/>
</dbReference>
<dbReference type="PANTHER" id="PTHR10529">
    <property type="entry name" value="AP COMPLEX SUBUNIT MU"/>
    <property type="match status" value="1"/>
</dbReference>
<dbReference type="Pfam" id="PF00928">
    <property type="entry name" value="Adap_comp_sub"/>
    <property type="match status" value="1"/>
</dbReference>
<dbReference type="Pfam" id="PF01217">
    <property type="entry name" value="Clat_adaptor_s"/>
    <property type="match status" value="1"/>
</dbReference>
<dbReference type="PIRSF" id="PIRSF005992">
    <property type="entry name" value="Clathrin_mu"/>
    <property type="match status" value="1"/>
</dbReference>
<dbReference type="PRINTS" id="PR00314">
    <property type="entry name" value="CLATHRINADPT"/>
</dbReference>
<dbReference type="SUPFAM" id="SSF49447">
    <property type="entry name" value="Second domain of Mu2 adaptin subunit (ap50) of ap2 adaptor"/>
    <property type="match status" value="1"/>
</dbReference>
<dbReference type="SUPFAM" id="SSF64356">
    <property type="entry name" value="SNARE-like"/>
    <property type="match status" value="1"/>
</dbReference>
<dbReference type="PROSITE" id="PS00990">
    <property type="entry name" value="CLAT_ADAPTOR_M_1"/>
    <property type="match status" value="1"/>
</dbReference>
<dbReference type="PROSITE" id="PS00991">
    <property type="entry name" value="CLAT_ADAPTOR_M_2"/>
    <property type="match status" value="1"/>
</dbReference>
<dbReference type="PROSITE" id="PS51072">
    <property type="entry name" value="MHD"/>
    <property type="match status" value="1"/>
</dbReference>
<proteinExistence type="evidence at transcript level"/>
<name>AP2M_DICDI</name>
<sequence>MISALFLMNGKGEVLISRIYRDDISRGVANAFRLEVIGSQETRSPVKLIGSTSFMYIKVGNIYIVGVSRQNVNACMVFEVLHQLVDIFKSYFDNLDEDSIRNNFVLVYELLDEILDFGYPQNCSTDVLKLYITQGQGKLKSLDKLKQDKISKITIQATGTTPWRTPDIKYKRNELYIDVVESVNLLMSAEGNILRADVSGQVMMKCFLSGMPECKFGMNDKVIMDREKSTNGGSAARSGARRANGIEIDDITFHQCVRLGKFDSDRTVSFIPPDGEFELMRYRTTEHINLPFKVIPIVREMGRTRLECSVTVKSNFSSKMFGANVKVIIPTPKNTAVCKIVVAAGKAKYMPEQDAIIWRIRRFPGDTEFTLRAEVELMASVNLDKKAWSRPPISMEFQVTMFTASGFSVRFLKVVEKSNYTPIKWVRYLTKAGTYQNRI</sequence>
<evidence type="ECO:0000250" key="1"/>
<evidence type="ECO:0000255" key="2">
    <source>
        <dbReference type="PROSITE-ProRule" id="PRU00404"/>
    </source>
</evidence>
<evidence type="ECO:0000305" key="3"/>
<comment type="function">
    <text>Component of the adaptor complexes which link clathrin to receptors in coated vesicles. Clathrin-associated protein complexes are believed to interact with the cytoplasmic tails of membrane proteins, leading to their selection and concentration. AP50 is a subunit of the plasma membrane adaptor.</text>
</comment>
<comment type="subunit">
    <text>Adaptor protein complex 2 (AP-2) is a heterotetramer composed of two large adaptins (alpha-type and beta-type subunits), a medium adaptin (mu-type subunit AP50) and a small adaptin (sigma-type subunit AP17).</text>
</comment>
<comment type="subcellular location">
    <subcellularLocation>
        <location>Cell membrane</location>
    </subcellularLocation>
    <subcellularLocation>
        <location>Membrane</location>
        <location>Coated pit</location>
        <topology>Peripheral membrane protein</topology>
        <orientation>Cytoplasmic side</orientation>
    </subcellularLocation>
    <text>Component of the coat surrounding the cytoplasmic face of coated vesicles in the plasma membrane.</text>
</comment>
<comment type="PTM">
    <text evidence="1">Phosphorylated.</text>
</comment>
<comment type="similarity">
    <text evidence="3">Belongs to the adaptor complexes medium subunit family.</text>
</comment>
<keyword id="KW-1003">Cell membrane</keyword>
<keyword id="KW-0168">Coated pit</keyword>
<keyword id="KW-0254">Endocytosis</keyword>
<keyword id="KW-0472">Membrane</keyword>
<keyword id="KW-0597">Phosphoprotein</keyword>
<keyword id="KW-0653">Protein transport</keyword>
<keyword id="KW-1185">Reference proteome</keyword>
<keyword id="KW-0813">Transport</keyword>
<gene>
    <name type="primary">apm2</name>
    <name type="synonym">apm1</name>
    <name type="synonym">apmA</name>
    <name type="ORF">DDB_G0277139</name>
</gene>